<name>RS4_SALA4</name>
<organism>
    <name type="scientific">Salmonella agona (strain SL483)</name>
    <dbReference type="NCBI Taxonomy" id="454166"/>
    <lineage>
        <taxon>Bacteria</taxon>
        <taxon>Pseudomonadati</taxon>
        <taxon>Pseudomonadota</taxon>
        <taxon>Gammaproteobacteria</taxon>
        <taxon>Enterobacterales</taxon>
        <taxon>Enterobacteriaceae</taxon>
        <taxon>Salmonella</taxon>
    </lineage>
</organism>
<accession>B5F7S2</accession>
<gene>
    <name evidence="1" type="primary">rpsD</name>
    <name type="ordered locus">SeAg_B3611</name>
</gene>
<evidence type="ECO:0000255" key="1">
    <source>
        <dbReference type="HAMAP-Rule" id="MF_01306"/>
    </source>
</evidence>
<evidence type="ECO:0000305" key="2"/>
<sequence length="206" mass="23485">MARYLGPKLKLSRREGTDLFLKSGVRAIDTKCKIEQAPGQHGARKPRLSDYGVQLREKQKVRRIYGVLERQFRNYYKEAARLKGNTGENLLALLEGRLDNVVYRMGFGATRAEARQLVSHKAIMVNGRVVNIASYQVSPNDVVSIREKAKKQSRVKAALELAEQREKPTWLEVDAGKMEGTYKRKPERSDLSADINEHLIVELYSK</sequence>
<comment type="function">
    <text evidence="1">One of the primary rRNA binding proteins, it binds directly to 16S rRNA where it nucleates assembly of the body of the 30S subunit.</text>
</comment>
<comment type="function">
    <text evidence="1">With S5 and S12 plays an important role in translational accuracy.</text>
</comment>
<comment type="subunit">
    <text evidence="1">Part of the 30S ribosomal subunit. Contacts protein S5. The interaction surface between S4 and S5 is involved in control of translational fidelity.</text>
</comment>
<comment type="similarity">
    <text evidence="1">Belongs to the universal ribosomal protein uS4 family.</text>
</comment>
<protein>
    <recommendedName>
        <fullName evidence="1">Small ribosomal subunit protein uS4</fullName>
    </recommendedName>
    <alternativeName>
        <fullName evidence="2">30S ribosomal protein S4</fullName>
    </alternativeName>
</protein>
<dbReference type="EMBL" id="CP001138">
    <property type="protein sequence ID" value="ACH48734.1"/>
    <property type="molecule type" value="Genomic_DNA"/>
</dbReference>
<dbReference type="RefSeq" id="WP_000135226.1">
    <property type="nucleotide sequence ID" value="NC_011149.1"/>
</dbReference>
<dbReference type="SMR" id="B5F7S2"/>
<dbReference type="GeneID" id="93035755"/>
<dbReference type="KEGG" id="sea:SeAg_B3611"/>
<dbReference type="HOGENOM" id="CLU_092403_0_2_6"/>
<dbReference type="Proteomes" id="UP000008819">
    <property type="component" value="Chromosome"/>
</dbReference>
<dbReference type="GO" id="GO:0015935">
    <property type="term" value="C:small ribosomal subunit"/>
    <property type="evidence" value="ECO:0007669"/>
    <property type="project" value="InterPro"/>
</dbReference>
<dbReference type="GO" id="GO:0019843">
    <property type="term" value="F:rRNA binding"/>
    <property type="evidence" value="ECO:0007669"/>
    <property type="project" value="UniProtKB-UniRule"/>
</dbReference>
<dbReference type="GO" id="GO:0003735">
    <property type="term" value="F:structural constituent of ribosome"/>
    <property type="evidence" value="ECO:0007669"/>
    <property type="project" value="InterPro"/>
</dbReference>
<dbReference type="GO" id="GO:0042274">
    <property type="term" value="P:ribosomal small subunit biogenesis"/>
    <property type="evidence" value="ECO:0007669"/>
    <property type="project" value="TreeGrafter"/>
</dbReference>
<dbReference type="GO" id="GO:0006412">
    <property type="term" value="P:translation"/>
    <property type="evidence" value="ECO:0007669"/>
    <property type="project" value="UniProtKB-UniRule"/>
</dbReference>
<dbReference type="CDD" id="cd00165">
    <property type="entry name" value="S4"/>
    <property type="match status" value="1"/>
</dbReference>
<dbReference type="FunFam" id="1.10.1050.10:FF:000001">
    <property type="entry name" value="30S ribosomal protein S4"/>
    <property type="match status" value="1"/>
</dbReference>
<dbReference type="FunFam" id="3.10.290.10:FF:000001">
    <property type="entry name" value="30S ribosomal protein S4"/>
    <property type="match status" value="1"/>
</dbReference>
<dbReference type="Gene3D" id="1.10.1050.10">
    <property type="entry name" value="Ribosomal Protein S4 Delta 41, Chain A, domain 1"/>
    <property type="match status" value="1"/>
</dbReference>
<dbReference type="Gene3D" id="3.10.290.10">
    <property type="entry name" value="RNA-binding S4 domain"/>
    <property type="match status" value="1"/>
</dbReference>
<dbReference type="HAMAP" id="MF_01306_B">
    <property type="entry name" value="Ribosomal_uS4_B"/>
    <property type="match status" value="1"/>
</dbReference>
<dbReference type="InterPro" id="IPR022801">
    <property type="entry name" value="Ribosomal_uS4"/>
</dbReference>
<dbReference type="InterPro" id="IPR005709">
    <property type="entry name" value="Ribosomal_uS4_bac-type"/>
</dbReference>
<dbReference type="InterPro" id="IPR018079">
    <property type="entry name" value="Ribosomal_uS4_CS"/>
</dbReference>
<dbReference type="InterPro" id="IPR001912">
    <property type="entry name" value="Ribosomal_uS4_N"/>
</dbReference>
<dbReference type="InterPro" id="IPR002942">
    <property type="entry name" value="S4_RNA-bd"/>
</dbReference>
<dbReference type="InterPro" id="IPR036986">
    <property type="entry name" value="S4_RNA-bd_sf"/>
</dbReference>
<dbReference type="NCBIfam" id="NF003717">
    <property type="entry name" value="PRK05327.1"/>
    <property type="match status" value="1"/>
</dbReference>
<dbReference type="NCBIfam" id="TIGR01017">
    <property type="entry name" value="rpsD_bact"/>
    <property type="match status" value="1"/>
</dbReference>
<dbReference type="PANTHER" id="PTHR11831">
    <property type="entry name" value="30S 40S RIBOSOMAL PROTEIN"/>
    <property type="match status" value="1"/>
</dbReference>
<dbReference type="PANTHER" id="PTHR11831:SF4">
    <property type="entry name" value="SMALL RIBOSOMAL SUBUNIT PROTEIN US4M"/>
    <property type="match status" value="1"/>
</dbReference>
<dbReference type="Pfam" id="PF00163">
    <property type="entry name" value="Ribosomal_S4"/>
    <property type="match status" value="1"/>
</dbReference>
<dbReference type="Pfam" id="PF01479">
    <property type="entry name" value="S4"/>
    <property type="match status" value="1"/>
</dbReference>
<dbReference type="SMART" id="SM01390">
    <property type="entry name" value="Ribosomal_S4"/>
    <property type="match status" value="1"/>
</dbReference>
<dbReference type="SMART" id="SM00363">
    <property type="entry name" value="S4"/>
    <property type="match status" value="1"/>
</dbReference>
<dbReference type="SUPFAM" id="SSF55174">
    <property type="entry name" value="Alpha-L RNA-binding motif"/>
    <property type="match status" value="1"/>
</dbReference>
<dbReference type="PROSITE" id="PS00632">
    <property type="entry name" value="RIBOSOMAL_S4"/>
    <property type="match status" value="1"/>
</dbReference>
<dbReference type="PROSITE" id="PS50889">
    <property type="entry name" value="S4"/>
    <property type="match status" value="1"/>
</dbReference>
<feature type="chain" id="PRO_1000140784" description="Small ribosomal subunit protein uS4">
    <location>
        <begin position="1"/>
        <end position="206"/>
    </location>
</feature>
<feature type="domain" description="S4 RNA-binding" evidence="1">
    <location>
        <begin position="96"/>
        <end position="156"/>
    </location>
</feature>
<proteinExistence type="inferred from homology"/>
<reference key="1">
    <citation type="journal article" date="2011" name="J. Bacteriol.">
        <title>Comparative genomics of 28 Salmonella enterica isolates: evidence for CRISPR-mediated adaptive sublineage evolution.</title>
        <authorList>
            <person name="Fricke W.F."/>
            <person name="Mammel M.K."/>
            <person name="McDermott P.F."/>
            <person name="Tartera C."/>
            <person name="White D.G."/>
            <person name="Leclerc J.E."/>
            <person name="Ravel J."/>
            <person name="Cebula T.A."/>
        </authorList>
    </citation>
    <scope>NUCLEOTIDE SEQUENCE [LARGE SCALE GENOMIC DNA]</scope>
    <source>
        <strain>SL483</strain>
    </source>
</reference>
<keyword id="KW-0687">Ribonucleoprotein</keyword>
<keyword id="KW-0689">Ribosomal protein</keyword>
<keyword id="KW-0694">RNA-binding</keyword>
<keyword id="KW-0699">rRNA-binding</keyword>